<keyword id="KW-0157">Chromophore</keyword>
<keyword id="KW-1015">Disulfide bond</keyword>
<keyword id="KW-0297">G-protein coupled receptor</keyword>
<keyword id="KW-0325">Glycoprotein</keyword>
<keyword id="KW-0449">Lipoprotein</keyword>
<keyword id="KW-0472">Membrane</keyword>
<keyword id="KW-0564">Palmitate</keyword>
<keyword id="KW-0597">Phosphoprotein</keyword>
<keyword id="KW-0600">Photoreceptor protein</keyword>
<keyword id="KW-0675">Receptor</keyword>
<keyword id="KW-1185">Reference proteome</keyword>
<keyword id="KW-0681">Retinal protein</keyword>
<keyword id="KW-0716">Sensory transduction</keyword>
<keyword id="KW-0807">Transducer</keyword>
<keyword id="KW-0812">Transmembrane</keyword>
<keyword id="KW-1133">Transmembrane helix</keyword>
<keyword id="KW-0844">Vision</keyword>
<feature type="chain" id="PRO_0000197753" description="Blue-sensitive opsin">
    <location>
        <begin position="1"/>
        <end position="355"/>
    </location>
</feature>
<feature type="topological domain" description="Extracellular">
    <location>
        <begin position="1"/>
        <end position="36"/>
    </location>
</feature>
<feature type="transmembrane region" description="Helical; Name=1" evidence="2">
    <location>
        <begin position="37"/>
        <end position="61"/>
    </location>
</feature>
<feature type="topological domain" description="Cytoplasmic">
    <location>
        <begin position="62"/>
        <end position="73"/>
    </location>
</feature>
<feature type="transmembrane region" description="Helical; Name=2" evidence="2">
    <location>
        <begin position="74"/>
        <end position="98"/>
    </location>
</feature>
<feature type="topological domain" description="Extracellular">
    <location>
        <begin position="99"/>
        <end position="113"/>
    </location>
</feature>
<feature type="transmembrane region" description="Helical; Name=3" evidence="2">
    <location>
        <begin position="114"/>
        <end position="133"/>
    </location>
</feature>
<feature type="topological domain" description="Cytoplasmic">
    <location>
        <begin position="134"/>
        <end position="152"/>
    </location>
</feature>
<feature type="transmembrane region" description="Helical; Name=4" evidence="2">
    <location>
        <begin position="153"/>
        <end position="176"/>
    </location>
</feature>
<feature type="topological domain" description="Extracellular">
    <location>
        <begin position="177"/>
        <end position="202"/>
    </location>
</feature>
<feature type="transmembrane region" description="Helical; Name=5" evidence="2">
    <location>
        <begin position="203"/>
        <end position="230"/>
    </location>
</feature>
<feature type="topological domain" description="Cytoplasmic">
    <location>
        <begin position="231"/>
        <end position="252"/>
    </location>
</feature>
<feature type="transmembrane region" description="Helical; Name=6" evidence="2">
    <location>
        <begin position="253"/>
        <end position="276"/>
    </location>
</feature>
<feature type="topological domain" description="Extracellular">
    <location>
        <begin position="277"/>
        <end position="284"/>
    </location>
</feature>
<feature type="transmembrane region" description="Helical; Name=7" evidence="2">
    <location>
        <begin position="285"/>
        <end position="309"/>
    </location>
</feature>
<feature type="topological domain" description="Cytoplasmic">
    <location>
        <begin position="310"/>
        <end position="355"/>
    </location>
</feature>
<feature type="region of interest" description="Disordered" evidence="4">
    <location>
        <begin position="332"/>
        <end position="355"/>
    </location>
</feature>
<feature type="compositionally biased region" description="Low complexity" evidence="4">
    <location>
        <begin position="334"/>
        <end position="355"/>
    </location>
</feature>
<feature type="modified residue" description="N6-(retinylidene)lysine" evidence="1">
    <location>
        <position position="296"/>
    </location>
</feature>
<feature type="lipid moiety-binding region" description="S-palmitoyl cysteine" evidence="1">
    <location>
        <position position="322"/>
    </location>
</feature>
<feature type="lipid moiety-binding region" description="S-palmitoyl cysteine" evidence="1">
    <location>
        <position position="323"/>
    </location>
</feature>
<feature type="glycosylation site" description="N-linked (GlcNAc...) asparagine" evidence="2">
    <location>
        <position position="2"/>
    </location>
</feature>
<feature type="glycosylation site" description="N-linked (GlcNAc...) asparagine" evidence="2">
    <location>
        <position position="15"/>
    </location>
</feature>
<feature type="glycosylation site" description="N-linked (GlcNAc...) asparagine" evidence="2">
    <location>
        <position position="200"/>
    </location>
</feature>
<feature type="disulfide bond" evidence="3">
    <location>
        <begin position="110"/>
        <end position="187"/>
    </location>
</feature>
<protein>
    <recommendedName>
        <fullName>Blue-sensitive opsin</fullName>
    </recommendedName>
    <alternativeName>
        <fullName>Blue photoreceptor pigment</fullName>
    </alternativeName>
    <alternativeName>
        <fullName>RH2 opsin</fullName>
    </alternativeName>
</protein>
<accession>P51471</accession>
<evidence type="ECO:0000250" key="1"/>
<evidence type="ECO:0000255" key="2"/>
<evidence type="ECO:0000255" key="3">
    <source>
        <dbReference type="PROSITE-ProRule" id="PRU00521"/>
    </source>
</evidence>
<evidence type="ECO:0000256" key="4">
    <source>
        <dbReference type="SAM" id="MobiDB-lite"/>
    </source>
</evidence>
<proteinExistence type="evidence at protein level"/>
<dbReference type="EMBL" id="S79167">
    <property type="protein sequence ID" value="AAB35062.1"/>
    <property type="molecule type" value="Genomic_DNA"/>
</dbReference>
<dbReference type="EMBL" id="S79124">
    <property type="protein sequence ID" value="AAB35062.1"/>
    <property type="status" value="JOINED"/>
    <property type="molecule type" value="Genomic_DNA"/>
</dbReference>
<dbReference type="EMBL" id="S79134">
    <property type="protein sequence ID" value="AAB35062.1"/>
    <property type="status" value="JOINED"/>
    <property type="molecule type" value="Genomic_DNA"/>
</dbReference>
<dbReference type="EMBL" id="S79165">
    <property type="protein sequence ID" value="AAB35062.1"/>
    <property type="status" value="JOINED"/>
    <property type="molecule type" value="Genomic_DNA"/>
</dbReference>
<dbReference type="EMBL" id="S79166">
    <property type="protein sequence ID" value="AAB35062.1"/>
    <property type="status" value="JOINED"/>
    <property type="molecule type" value="Genomic_DNA"/>
</dbReference>
<dbReference type="PIR" id="I51319">
    <property type="entry name" value="I51319"/>
</dbReference>
<dbReference type="RefSeq" id="NP_001278323.1">
    <property type="nucleotide sequence ID" value="NM_001291394.1"/>
</dbReference>
<dbReference type="SMR" id="P51471"/>
<dbReference type="FunCoup" id="P51471">
    <property type="interactions" value="16"/>
</dbReference>
<dbReference type="STRING" id="28377.ENSACAP00000015846"/>
<dbReference type="Ensembl" id="ENSACAT00000016163.3">
    <property type="protein sequence ID" value="ENSACAP00000015846.1"/>
    <property type="gene ID" value="ENSACAG00000016065.3"/>
</dbReference>
<dbReference type="GeneID" id="100553640"/>
<dbReference type="KEGG" id="acs:100553640"/>
<dbReference type="CTD" id="42261"/>
<dbReference type="eggNOG" id="KOG3656">
    <property type="taxonomic scope" value="Eukaryota"/>
</dbReference>
<dbReference type="GeneTree" id="ENSGT01030000234549"/>
<dbReference type="HOGENOM" id="CLU_009579_3_0_1"/>
<dbReference type="InParanoid" id="P51471"/>
<dbReference type="OMA" id="WNGYFIF"/>
<dbReference type="OrthoDB" id="5962323at2759"/>
<dbReference type="TreeFam" id="TF324998"/>
<dbReference type="Proteomes" id="UP000001646">
    <property type="component" value="Chromosome 4"/>
</dbReference>
<dbReference type="Bgee" id="ENSACAG00000016065">
    <property type="expression patterns" value="Expressed in dewlap"/>
</dbReference>
<dbReference type="GO" id="GO:0001750">
    <property type="term" value="C:photoreceptor outer segment"/>
    <property type="evidence" value="ECO:0000318"/>
    <property type="project" value="GO_Central"/>
</dbReference>
<dbReference type="GO" id="GO:0005886">
    <property type="term" value="C:plasma membrane"/>
    <property type="evidence" value="ECO:0000318"/>
    <property type="project" value="GO_Central"/>
</dbReference>
<dbReference type="GO" id="GO:0008020">
    <property type="term" value="F:G protein-coupled photoreceptor activity"/>
    <property type="evidence" value="ECO:0000318"/>
    <property type="project" value="GO_Central"/>
</dbReference>
<dbReference type="GO" id="GO:0016038">
    <property type="term" value="P:absorption of visible light"/>
    <property type="evidence" value="ECO:0000250"/>
    <property type="project" value="AgBase"/>
</dbReference>
<dbReference type="GO" id="GO:0071482">
    <property type="term" value="P:cellular response to light stimulus"/>
    <property type="evidence" value="ECO:0000318"/>
    <property type="project" value="GO_Central"/>
</dbReference>
<dbReference type="GO" id="GO:0007186">
    <property type="term" value="P:G protein-coupled receptor signaling pathway"/>
    <property type="evidence" value="ECO:0000318"/>
    <property type="project" value="GO_Central"/>
</dbReference>
<dbReference type="GO" id="GO:0016037">
    <property type="term" value="P:light absorption"/>
    <property type="evidence" value="ECO:0000250"/>
    <property type="project" value="AgBase"/>
</dbReference>
<dbReference type="GO" id="GO:0007602">
    <property type="term" value="P:phototransduction"/>
    <property type="evidence" value="ECO:0000318"/>
    <property type="project" value="GO_Central"/>
</dbReference>
<dbReference type="GO" id="GO:0007601">
    <property type="term" value="P:visual perception"/>
    <property type="evidence" value="ECO:0007669"/>
    <property type="project" value="UniProtKB-KW"/>
</dbReference>
<dbReference type="FunFam" id="1.20.1070.10:FF:000018">
    <property type="entry name" value="Rhodopsin"/>
    <property type="match status" value="1"/>
</dbReference>
<dbReference type="Gene3D" id="1.20.1070.10">
    <property type="entry name" value="Rhodopsin 7-helix transmembrane proteins"/>
    <property type="match status" value="1"/>
</dbReference>
<dbReference type="InterPro" id="IPR050125">
    <property type="entry name" value="GPCR_opsins"/>
</dbReference>
<dbReference type="InterPro" id="IPR000276">
    <property type="entry name" value="GPCR_Rhodpsn"/>
</dbReference>
<dbReference type="InterPro" id="IPR017452">
    <property type="entry name" value="GPCR_Rhodpsn_7TM"/>
</dbReference>
<dbReference type="InterPro" id="IPR001760">
    <property type="entry name" value="Opsin"/>
</dbReference>
<dbReference type="InterPro" id="IPR027430">
    <property type="entry name" value="Retinal_BS"/>
</dbReference>
<dbReference type="InterPro" id="IPR000732">
    <property type="entry name" value="Rhodopsin"/>
</dbReference>
<dbReference type="InterPro" id="IPR019477">
    <property type="entry name" value="Rhodopsin_N"/>
</dbReference>
<dbReference type="PANTHER" id="PTHR24240">
    <property type="entry name" value="OPSIN"/>
    <property type="match status" value="1"/>
</dbReference>
<dbReference type="Pfam" id="PF00001">
    <property type="entry name" value="7tm_1"/>
    <property type="match status" value="1"/>
</dbReference>
<dbReference type="Pfam" id="PF10413">
    <property type="entry name" value="Rhodopsin_N"/>
    <property type="match status" value="1"/>
</dbReference>
<dbReference type="PRINTS" id="PR00237">
    <property type="entry name" value="GPCRRHODOPSN"/>
</dbReference>
<dbReference type="PRINTS" id="PR00238">
    <property type="entry name" value="OPSIN"/>
</dbReference>
<dbReference type="PRINTS" id="PR00579">
    <property type="entry name" value="RHODOPSIN"/>
</dbReference>
<dbReference type="SUPFAM" id="SSF81321">
    <property type="entry name" value="Family A G protein-coupled receptor-like"/>
    <property type="match status" value="1"/>
</dbReference>
<dbReference type="PROSITE" id="PS00237">
    <property type="entry name" value="G_PROTEIN_RECEP_F1_1"/>
    <property type="match status" value="1"/>
</dbReference>
<dbReference type="PROSITE" id="PS50262">
    <property type="entry name" value="G_PROTEIN_RECEP_F1_2"/>
    <property type="match status" value="1"/>
</dbReference>
<dbReference type="PROSITE" id="PS00238">
    <property type="entry name" value="OPSIN"/>
    <property type="match status" value="1"/>
</dbReference>
<sequence length="355" mass="39983">MNGTEGINFYVPLSNKTGLVRSPFEYPQYYLAEPWKYKVVCCYIFFLIFTGLPINILTLLVTFKHKKLRQPLNYILVNLAVADLFMACFGFTVTFYTAWNGYFIFGPIGCAIEGFFATLGGQVALWSLVVLAIERYIVVCKPMGNFRFSATHALMGISFTWFMSFSCAAPPLLGWSRYIPEGMQCSCGPDYYTLNPDYHNESYVLYMFGVHFVIPVVVIFFSYGRLICKVREAAAQQQESASTQKAEREVTRMVILMVLGFLLAWTPYAMVAFWIFTNKGVDFSATLMSVPAFFSKSSSLYNPIIYVLMNKQFRNCMITTICCGKNPFGDEDVSSSVSQSKTEVSSVSSSQVSPA</sequence>
<reference key="1">
    <citation type="journal article" date="1995" name="J. Mol. Evol.">
        <title>Paralogous origin of the rhodopsinlike opsin genes in lizards.</title>
        <authorList>
            <person name="Kawamura S."/>
            <person name="Yokoyama S."/>
        </authorList>
    </citation>
    <scope>NUCLEOTIDE SEQUENCE [GENOMIC DNA]</scope>
</reference>
<organism>
    <name type="scientific">Anolis carolinensis</name>
    <name type="common">Green anole</name>
    <name type="synonym">American chameleon</name>
    <dbReference type="NCBI Taxonomy" id="28377"/>
    <lineage>
        <taxon>Eukaryota</taxon>
        <taxon>Metazoa</taxon>
        <taxon>Chordata</taxon>
        <taxon>Craniata</taxon>
        <taxon>Vertebrata</taxon>
        <taxon>Euteleostomi</taxon>
        <taxon>Lepidosauria</taxon>
        <taxon>Squamata</taxon>
        <taxon>Bifurcata</taxon>
        <taxon>Unidentata</taxon>
        <taxon>Episquamata</taxon>
        <taxon>Toxicofera</taxon>
        <taxon>Iguania</taxon>
        <taxon>Dactyloidae</taxon>
        <taxon>Anolis</taxon>
    </lineage>
</organism>
<name>OPSB_ANOCA</name>
<comment type="function">
    <text>Visual pigments are the light-absorbing molecules that mediate vision. They consist of an apoprotein, opsin, covalently linked to cis-retinal. This opsin uses a vitamin A2 chromophore.</text>
</comment>
<comment type="biophysicochemical properties">
    <absorption>
        <max>~503 nm</max>
    </absorption>
</comment>
<comment type="subcellular location">
    <subcellularLocation>
        <location>Membrane</location>
        <topology>Multi-pass membrane protein</topology>
    </subcellularLocation>
</comment>
<comment type="PTM">
    <text evidence="1">Phosphorylated on some or all of the serine and threonine residues present in the C-terminal region.</text>
</comment>
<comment type="similarity">
    <text evidence="3">Belongs to the G-protein coupled receptor 1 family. Opsin subfamily.</text>
</comment>